<evidence type="ECO:0000250" key="1"/>
<evidence type="ECO:0000250" key="2">
    <source>
        <dbReference type="UniProtKB" id="P05412"/>
    </source>
</evidence>
<evidence type="ECO:0000250" key="3">
    <source>
        <dbReference type="UniProtKB" id="P05627"/>
    </source>
</evidence>
<evidence type="ECO:0000250" key="4">
    <source>
        <dbReference type="UniProtKB" id="P17325"/>
    </source>
</evidence>
<evidence type="ECO:0000255" key="5">
    <source>
        <dbReference type="PROSITE-ProRule" id="PRU00978"/>
    </source>
</evidence>
<evidence type="ECO:0000256" key="6">
    <source>
        <dbReference type="SAM" id="MobiDB-lite"/>
    </source>
</evidence>
<evidence type="ECO:0000305" key="7"/>
<gene>
    <name type="primary">JUN</name>
</gene>
<dbReference type="EMBL" id="S83515">
    <property type="protein sequence ID" value="AAB50808.1"/>
    <property type="molecule type" value="mRNA"/>
</dbReference>
<dbReference type="RefSeq" id="NP_999045.1">
    <property type="nucleotide sequence ID" value="NM_213880.1"/>
</dbReference>
<dbReference type="SMR" id="P56432"/>
<dbReference type="FunCoup" id="P56432">
    <property type="interactions" value="1133"/>
</dbReference>
<dbReference type="iPTMnet" id="P56432"/>
<dbReference type="PaxDb" id="9823-ENSSSCP00000030489"/>
<dbReference type="GeneID" id="396913"/>
<dbReference type="KEGG" id="ssc:396913"/>
<dbReference type="CTD" id="3725"/>
<dbReference type="eggNOG" id="KOG0837">
    <property type="taxonomic scope" value="Eukaryota"/>
</dbReference>
<dbReference type="InParanoid" id="P56432"/>
<dbReference type="OrthoDB" id="2187714at2759"/>
<dbReference type="Proteomes" id="UP000008227">
    <property type="component" value="Unplaced"/>
</dbReference>
<dbReference type="Proteomes" id="UP000314985">
    <property type="component" value="Unplaced"/>
</dbReference>
<dbReference type="Proteomes" id="UP000694570">
    <property type="component" value="Unplaced"/>
</dbReference>
<dbReference type="Proteomes" id="UP000694571">
    <property type="component" value="Unplaced"/>
</dbReference>
<dbReference type="Proteomes" id="UP000694720">
    <property type="component" value="Unplaced"/>
</dbReference>
<dbReference type="Proteomes" id="UP000694722">
    <property type="component" value="Unplaced"/>
</dbReference>
<dbReference type="Proteomes" id="UP000694723">
    <property type="component" value="Unplaced"/>
</dbReference>
<dbReference type="Proteomes" id="UP000694724">
    <property type="component" value="Unplaced"/>
</dbReference>
<dbReference type="Proteomes" id="UP000694725">
    <property type="component" value="Unplaced"/>
</dbReference>
<dbReference type="Proteomes" id="UP000694726">
    <property type="component" value="Unplaced"/>
</dbReference>
<dbReference type="Proteomes" id="UP000694727">
    <property type="component" value="Unplaced"/>
</dbReference>
<dbReference type="Proteomes" id="UP000694728">
    <property type="component" value="Unplaced"/>
</dbReference>
<dbReference type="GO" id="GO:0005634">
    <property type="term" value="C:nucleus"/>
    <property type="evidence" value="ECO:0000314"/>
    <property type="project" value="AgBase"/>
</dbReference>
<dbReference type="GO" id="GO:0005667">
    <property type="term" value="C:transcription regulator complex"/>
    <property type="evidence" value="ECO:0000318"/>
    <property type="project" value="GO_Central"/>
</dbReference>
<dbReference type="GO" id="GO:0003677">
    <property type="term" value="F:DNA binding"/>
    <property type="evidence" value="ECO:0000315"/>
    <property type="project" value="AgBase"/>
</dbReference>
<dbReference type="GO" id="GO:0000981">
    <property type="term" value="F:DNA-binding transcription factor activity, RNA polymerase II-specific"/>
    <property type="evidence" value="ECO:0000318"/>
    <property type="project" value="GO_Central"/>
</dbReference>
<dbReference type="GO" id="GO:0000978">
    <property type="term" value="F:RNA polymerase II cis-regulatory region sequence-specific DNA binding"/>
    <property type="evidence" value="ECO:0000318"/>
    <property type="project" value="GO_Central"/>
</dbReference>
<dbReference type="GO" id="GO:0000976">
    <property type="term" value="F:transcription cis-regulatory region binding"/>
    <property type="evidence" value="ECO:0000250"/>
    <property type="project" value="UniProtKB"/>
</dbReference>
<dbReference type="GO" id="GO:0071222">
    <property type="term" value="P:cellular response to lipopolysaccharide"/>
    <property type="evidence" value="ECO:0000314"/>
    <property type="project" value="AgBase"/>
</dbReference>
<dbReference type="GO" id="GO:0006955">
    <property type="term" value="P:immune response"/>
    <property type="evidence" value="ECO:0000314"/>
    <property type="project" value="AgBase"/>
</dbReference>
<dbReference type="GO" id="GO:0051091">
    <property type="term" value="P:positive regulation of DNA-binding transcription factor activity"/>
    <property type="evidence" value="ECO:0000315"/>
    <property type="project" value="AgBase"/>
</dbReference>
<dbReference type="GO" id="GO:0045893">
    <property type="term" value="P:positive regulation of DNA-templated transcription"/>
    <property type="evidence" value="ECO:0000315"/>
    <property type="project" value="AgBase"/>
</dbReference>
<dbReference type="GO" id="GO:0045944">
    <property type="term" value="P:positive regulation of transcription by RNA polymerase II"/>
    <property type="evidence" value="ECO:0000250"/>
    <property type="project" value="UniProtKB"/>
</dbReference>
<dbReference type="GO" id="GO:0051726">
    <property type="term" value="P:regulation of cell cycle"/>
    <property type="evidence" value="ECO:0000318"/>
    <property type="project" value="GO_Central"/>
</dbReference>
<dbReference type="GO" id="GO:0042127">
    <property type="term" value="P:regulation of cell population proliferation"/>
    <property type="evidence" value="ECO:0000318"/>
    <property type="project" value="GO_Central"/>
</dbReference>
<dbReference type="GO" id="GO:0048545">
    <property type="term" value="P:response to steroid hormone"/>
    <property type="evidence" value="ECO:0000318"/>
    <property type="project" value="GO_Central"/>
</dbReference>
<dbReference type="CDD" id="cd14696">
    <property type="entry name" value="bZIP_Jun"/>
    <property type="match status" value="1"/>
</dbReference>
<dbReference type="FunFam" id="1.20.5.170:FF:000012">
    <property type="entry name" value="Putative transcription factor AP-1"/>
    <property type="match status" value="1"/>
</dbReference>
<dbReference type="Gene3D" id="1.20.5.170">
    <property type="match status" value="1"/>
</dbReference>
<dbReference type="InterPro" id="IPR050946">
    <property type="entry name" value="AP-1_TF_bZIP"/>
</dbReference>
<dbReference type="InterPro" id="IPR004827">
    <property type="entry name" value="bZIP"/>
</dbReference>
<dbReference type="InterPro" id="IPR046347">
    <property type="entry name" value="bZIP_sf"/>
</dbReference>
<dbReference type="InterPro" id="IPR005643">
    <property type="entry name" value="JNK"/>
</dbReference>
<dbReference type="InterPro" id="IPR002112">
    <property type="entry name" value="Leuzip_Jun"/>
</dbReference>
<dbReference type="InterPro" id="IPR008917">
    <property type="entry name" value="TF_DNA-bd_sf"/>
</dbReference>
<dbReference type="PANTHER" id="PTHR11462">
    <property type="entry name" value="JUN TRANSCRIPTION FACTOR-RELATED"/>
    <property type="match status" value="1"/>
</dbReference>
<dbReference type="PANTHER" id="PTHR11462:SF8">
    <property type="entry name" value="TRANSCRIPTION FACTOR JUN"/>
    <property type="match status" value="1"/>
</dbReference>
<dbReference type="Pfam" id="PF00170">
    <property type="entry name" value="bZIP_1"/>
    <property type="match status" value="1"/>
</dbReference>
<dbReference type="Pfam" id="PF03957">
    <property type="entry name" value="Jun"/>
    <property type="match status" value="1"/>
</dbReference>
<dbReference type="PRINTS" id="PR00043">
    <property type="entry name" value="LEUZIPPRJUN"/>
</dbReference>
<dbReference type="SMART" id="SM00338">
    <property type="entry name" value="BRLZ"/>
    <property type="match status" value="1"/>
</dbReference>
<dbReference type="SUPFAM" id="SSF47454">
    <property type="entry name" value="A DNA-binding domain in eukaryotic transcription factors"/>
    <property type="match status" value="1"/>
</dbReference>
<dbReference type="SUPFAM" id="SSF57959">
    <property type="entry name" value="Leucine zipper domain"/>
    <property type="match status" value="1"/>
</dbReference>
<dbReference type="PROSITE" id="PS50217">
    <property type="entry name" value="BZIP"/>
    <property type="match status" value="1"/>
</dbReference>
<dbReference type="PROSITE" id="PS00036">
    <property type="entry name" value="BZIP_BASIC"/>
    <property type="match status" value="1"/>
</dbReference>
<name>JUN_PIG</name>
<organism>
    <name type="scientific">Sus scrofa</name>
    <name type="common">Pig</name>
    <dbReference type="NCBI Taxonomy" id="9823"/>
    <lineage>
        <taxon>Eukaryota</taxon>
        <taxon>Metazoa</taxon>
        <taxon>Chordata</taxon>
        <taxon>Craniata</taxon>
        <taxon>Vertebrata</taxon>
        <taxon>Euteleostomi</taxon>
        <taxon>Mammalia</taxon>
        <taxon>Eutheria</taxon>
        <taxon>Laurasiatheria</taxon>
        <taxon>Artiodactyla</taxon>
        <taxon>Suina</taxon>
        <taxon>Suidae</taxon>
        <taxon>Sus</taxon>
    </lineage>
</organism>
<reference key="1">
    <citation type="journal article" date="1996" name="Mol. Cell. Endocrinol.">
        <title>Molecular cloning of c-jun and c-fos cDNAs from porcine anterior pituitary and their involvement in gonadotropin-releasing hormone stimulation.</title>
        <authorList>
            <person name="Chung H.-O."/>
            <person name="Kato T."/>
            <person name="Kato Y."/>
        </authorList>
    </citation>
    <scope>NUCLEOTIDE SEQUENCE [MRNA]</scope>
    <source>
        <tissue>Pituitary anterior lobe</tissue>
    </source>
</reference>
<reference key="2">
    <citation type="journal article" date="1996" name="Mol. Cell. Endocrinol.">
        <authorList>
            <person name="Chung H.-O."/>
            <person name="Kato T."/>
            <person name="Kato Y."/>
        </authorList>
    </citation>
    <scope>ERRATUM OF PUBMED:8793856</scope>
</reference>
<proteinExistence type="evidence at transcript level"/>
<accession>P56432</accession>
<protein>
    <recommendedName>
        <fullName evidence="7">Transcription factor Jun</fullName>
    </recommendedName>
    <alternativeName>
        <fullName>Activator protein 1</fullName>
        <shortName>AP1</shortName>
    </alternativeName>
    <alternativeName>
        <fullName>Proto-oncogene c-Jun</fullName>
    </alternativeName>
    <alternativeName>
        <fullName evidence="7">Transcription factor AP-1 subunit Jun</fullName>
    </alternativeName>
    <alternativeName>
        <fullName>V-jun avian sarcoma virus 17 oncogene homolog</fullName>
    </alternativeName>
</protein>
<feature type="chain" id="PRO_0000076431" description="Transcription factor Jun">
    <location>
        <begin position="1"/>
        <end position="331"/>
    </location>
</feature>
<feature type="domain" description="bZIP" evidence="5">
    <location>
        <begin position="252"/>
        <end position="315"/>
    </location>
</feature>
<feature type="region of interest" description="Interaction with PAGE4" evidence="2">
    <location>
        <begin position="150"/>
        <end position="223"/>
    </location>
</feature>
<feature type="region of interest" description="Disordered" evidence="6">
    <location>
        <begin position="192"/>
        <end position="217"/>
    </location>
</feature>
<feature type="region of interest" description="Basic motif" evidence="5">
    <location>
        <begin position="252"/>
        <end position="279"/>
    </location>
</feature>
<feature type="region of interest" description="Leucine-zipper" evidence="5">
    <location>
        <begin position="280"/>
        <end position="308"/>
    </location>
</feature>
<feature type="compositionally biased region" description="Low complexity" evidence="6">
    <location>
        <begin position="192"/>
        <end position="207"/>
    </location>
</feature>
<feature type="site" description="Necessary for synergistic transcriptional activity with SMAD3" evidence="1">
    <location>
        <position position="272"/>
    </location>
</feature>
<feature type="modified residue" description="Phosphothreonine; by PAK2" evidence="2">
    <location>
        <position position="2"/>
    </location>
</feature>
<feature type="modified residue" description="Phosphothreonine; by PAK2" evidence="2">
    <location>
        <position position="8"/>
    </location>
</feature>
<feature type="modified residue" description="Phosphoserine" evidence="2">
    <location>
        <position position="58"/>
    </location>
</feature>
<feature type="modified residue" description="Phosphoserine; by MAPK8 and PLK3" evidence="2">
    <location>
        <position position="63"/>
    </location>
</feature>
<feature type="modified residue" description="Phosphoserine; by MAPK8 and PLK3" evidence="2">
    <location>
        <position position="73"/>
    </location>
</feature>
<feature type="modified residue" description="Phosphothreonine; by PAK2" evidence="2">
    <location>
        <position position="89"/>
    </location>
</feature>
<feature type="modified residue" description="Phosphothreonine" evidence="2">
    <location>
        <position position="91"/>
    </location>
</feature>
<feature type="modified residue" description="Phosphothreonine; by PAK2" evidence="2">
    <location>
        <position position="93"/>
    </location>
</feature>
<feature type="modified residue" description="Phosphothreonine; by GSK3-beta" evidence="2">
    <location>
        <position position="239"/>
    </location>
</feature>
<feature type="modified residue" description="Phosphoserine; by DYRK2 and GSK3-beta" evidence="2">
    <location>
        <position position="243"/>
    </location>
</feature>
<feature type="modified residue" description="Phosphoserine; by GSK3-beta" evidence="2">
    <location>
        <position position="249"/>
    </location>
</feature>
<feature type="modified residue" description="N6-acetyllysine" evidence="2">
    <location>
        <position position="271"/>
    </location>
</feature>
<feature type="modified residue" description="Phosphothreonine; by PAK2" evidence="2">
    <location>
        <position position="286"/>
    </location>
</feature>
<feature type="cross-link" description="Glycyl lysine isopeptide (Lys-Gly) (interchain with G-Cter in SUMO2)" evidence="2">
    <location>
        <position position="35"/>
    </location>
</feature>
<feature type="cross-link" description="Glycyl lysine isopeptide (Lys-Gly) (interchain with G-Cter in SUMO2)" evidence="2">
    <location>
        <position position="50"/>
    </location>
</feature>
<feature type="cross-link" description="Glycyl lysine isopeptide (Lys-Gly) (interchain with G-Cter in SUMO2)" evidence="2">
    <location>
        <position position="70"/>
    </location>
</feature>
<feature type="cross-link" description="Glycyl lysine isopeptide (Lys-Gly) (interchain with G-Cter in SUMO2)" evidence="2">
    <location>
        <position position="226"/>
    </location>
</feature>
<sequence>MTAKMETTFYDDALNASFLQSESGAYGYSNPKILKQSMTLNLADPVGNLKPHLRAQDSDLLTSPDVGLLKLASPELERLIIQSSNGHITTTPTPTQFLCPKNVTDEQEGFAEGFVRALAELHSQNTLPSVTSAAQPVSGAGLVAPAVASVAGGSGSGGFSASLHSEPPVYANLSNFNPGALSSGGGAPSYGAAGLAFPAQPQQQQQQPPQPPHHLPVQHPRLQALKEEPQTVPEMPGETPPLSPIDMESQERIKAERKRMRNRIAASKCRKRKLERIARLEEKVKTLKAQNSELASTANMLREQVAQLKQKVMNHVNSGCQLMLTQQLQTF</sequence>
<comment type="function">
    <text evidence="2 3">Transcription factor that recognizes and binds to the AP-1 consensus motif 5'-TGA[GC]TCA-3' (By similarity). Heterodimerizes with proteins of the FOS family to form an AP-1 transcription complex, thereby enhancing its DNA binding activity to the AP-1 consensus sequence 5'-TGA[GC]TCA-3' and enhancing its transcriptional activity (By similarity). Together with FOSB, plays a role in activation-induced cell death of T cells by binding to the AP-1 promoter site of FASLG/CD95L, and inducing its transcription in response to activation of the TCR/CD3 signaling pathway (By similarity). Promotes activity of NR5A1 when phosphorylated by HIPK3 leading to increased steroidogenic gene expression upon cAMP signaling pathway stimulation (By similarity). Involved in activated KRAS-mediated transcriptional activation of USP28. Binds to the USP28 promoter (By similarity). Interacts with FOSB to form an AP-1 transcription complex, thereby enhancing its DNA binding activity to an AP-1 consensus sequence and its transcriptional activity (By similarity). Together with FOSB, plays a role in activation-induced cell death of T cells by binding to the AP-1 site of FASLG/CD95L, and activating its transcription in T cells upon stimulation by TCR/CD3 (By similarity).</text>
</comment>
<comment type="subunit">
    <text evidence="2 3 4">Heterodimer with either BATF3 or ATF7 (By similarity). Heterodimer with FOS (By similarity). Heterodimer with FOSB isoform 1 and 2 (By similarity). Component of an AP-1 transcription factor complex composed of JUN-FOS heterodimers (By similarity). As part of the AP-1 transcription factor complex, forms heterodimers with FOSB, thereby binding to the AP-1 consensus sequence and stimulating transcription (By similarity). Interacts with FOS and FOSB isoform 1 and 2 (By similarity). The ATF7/JUN heterodimer is essential for ATF7 transactivation activity (By similarity). Interacts with TSC22D3 (via N-terminus); the interaction inhibits the binding of active AP1 to its target DNA (By similarity). Interacts with HIVEP3 and MYBBP1A (By similarity). Interacts with SP1, SPIB and TCF20. Interacts with COPS5; the interaction leads indirectly to its phosphorylation. Component of the SMAD3/SMAD4/JUN/FOS/complex which forms at the AP1 promoter site. The SMAD3/SMAD4 heterodimer acts synergistically with the JUN/FOS heterodimer to activate transcription in response to TGF-beta. Interacts (via its basic DNA binding and leucine zipper domains) with SMAD3 (via an N-terminal domain); the interaction is required for TGF-beta-mediated transactivation of the SMAD3/SMAD4/JUN/FOS/complex. Interacts with methylated RNF187. Binds to HIPK3. Interacts (when phosphorylated) with FBXW7. Found in a complex with PRR7 and FBXW7. Interacts with PRR7 and FBXW7; the interaction inhibits ubiquitination-mediated JUN degradation promoting its phosphorylation and transcriptional activity (By similarity). Interacts with RBM39 (By similarity). Interacts with PAGE4 (By similarity). Interacts with ARK2N and CSNK2B; the interaction with ARK2N is mediated by CSNK2B (By similarity).</text>
</comment>
<comment type="subcellular location">
    <subcellularLocation>
        <location evidence="2">Nucleus</location>
    </subcellularLocation>
</comment>
<comment type="PTM">
    <text evidence="2">Phosphorylated by CaMK4 and PRKDC; phosphorylation enhances the transcriptional activity. Phosphorylated by HIPK3. Phosphorylated by DYRK2 at Ser-243; this primes the protein for subsequent phosphorylation by GSK3B at Thr-239. Phosphorylated at Thr-239, Ser-243 and Ser-249 by GSK3B; phosphorylation reduces its ability to bind DNA. Phosphorylated by PAK2 at Thr-2, Thr-8, Thr-89, Thr-93 and Thr-286 thereby promoting JUN-mediated cell proliferation and transformation. Phosphorylated by PLK3 following hypoxia or UV irradiation, leading to increase DNA-binding activity (By similarity). Phosphorylated by VRK1 (By similarity).</text>
</comment>
<comment type="PTM">
    <text evidence="2">Ubiquitinated by the SCF(FBXW7), leading to its degradation. Ubiquitination takes place following phosphorylation, that promotes interaction with FBXW7.</text>
</comment>
<comment type="PTM">
    <text evidence="2">Acetylated at Lys-271 by EP300.</text>
</comment>
<comment type="similarity">
    <text evidence="7">Belongs to the bZIP family. Jun subfamily.</text>
</comment>
<keyword id="KW-0007">Acetylation</keyword>
<keyword id="KW-0010">Activator</keyword>
<keyword id="KW-0238">DNA-binding</keyword>
<keyword id="KW-1017">Isopeptide bond</keyword>
<keyword id="KW-0539">Nucleus</keyword>
<keyword id="KW-0597">Phosphoprotein</keyword>
<keyword id="KW-0656">Proto-oncogene</keyword>
<keyword id="KW-1185">Reference proteome</keyword>
<keyword id="KW-0804">Transcription</keyword>
<keyword id="KW-0805">Transcription regulation</keyword>
<keyword id="KW-0832">Ubl conjugation</keyword>